<accession>A8AIE5</accession>
<sequence length="400" mass="45808">MTQFASPVLHSLLDTDAYKLHMQQAVFHHYYDVHVAAEFRCRGDDLLGIYADAIREQVNAMQHLQLQEDEFQWLSGLPFFKADYLNWLRDFRYNPEQVCVTNDNGKLNIRLTGPWREVIMWEVPLLAVISELVHRYRSPEMGVAQALDALESKLVDFSALTADLNMSRFHLMDFGTRRRFSREVQQAIVKRLQQEPWFVGTSNYDLARRLSLTPMGTQAHEWFQAHQQISPDLATSQRAALAAWLNEYPNQLGIALTDCITMDAFLRDFGTEFATRYQGLRHDSGDPVEWGEKAIAHYQKLGIDPLSKTLVFSDNLDLKKAVDLYRHFSSRVQLSFGIGTRLTCDIPQVKPLNIVIKLVECNGKPVAKLSDSPGKTICHDKAFVRALRKAFDLPHIKKAS</sequence>
<dbReference type="EC" id="6.3.4.21" evidence="1"/>
<dbReference type="EMBL" id="CP000822">
    <property type="protein sequence ID" value="ABV13258.1"/>
    <property type="molecule type" value="Genomic_DNA"/>
</dbReference>
<dbReference type="RefSeq" id="WP_012132990.1">
    <property type="nucleotide sequence ID" value="NC_009792.1"/>
</dbReference>
<dbReference type="SMR" id="A8AIE5"/>
<dbReference type="STRING" id="290338.CKO_02134"/>
<dbReference type="GeneID" id="45136078"/>
<dbReference type="KEGG" id="cko:CKO_02134"/>
<dbReference type="HOGENOM" id="CLU_030991_1_0_6"/>
<dbReference type="OrthoDB" id="9771406at2"/>
<dbReference type="UniPathway" id="UPA00253">
    <property type="reaction ID" value="UER00457"/>
</dbReference>
<dbReference type="Proteomes" id="UP000008148">
    <property type="component" value="Chromosome"/>
</dbReference>
<dbReference type="GO" id="GO:0005829">
    <property type="term" value="C:cytosol"/>
    <property type="evidence" value="ECO:0007669"/>
    <property type="project" value="TreeGrafter"/>
</dbReference>
<dbReference type="GO" id="GO:0004516">
    <property type="term" value="F:nicotinate phosphoribosyltransferase activity"/>
    <property type="evidence" value="ECO:0007669"/>
    <property type="project" value="UniProtKB-UniRule"/>
</dbReference>
<dbReference type="GO" id="GO:0034355">
    <property type="term" value="P:NAD biosynthetic process via the salvage pathway"/>
    <property type="evidence" value="ECO:0007669"/>
    <property type="project" value="TreeGrafter"/>
</dbReference>
<dbReference type="CDD" id="cd01401">
    <property type="entry name" value="PncB_like"/>
    <property type="match status" value="1"/>
</dbReference>
<dbReference type="FunFam" id="3.20.140.10:FF:000001">
    <property type="entry name" value="Nicotinate phosphoribosyltransferase"/>
    <property type="match status" value="1"/>
</dbReference>
<dbReference type="Gene3D" id="3.20.140.10">
    <property type="entry name" value="nicotinate phosphoribosyltransferase"/>
    <property type="match status" value="1"/>
</dbReference>
<dbReference type="HAMAP" id="MF_00570">
    <property type="entry name" value="NAPRTase"/>
    <property type="match status" value="1"/>
</dbReference>
<dbReference type="InterPro" id="IPR041525">
    <property type="entry name" value="N/Namide_PRibTrfase"/>
</dbReference>
<dbReference type="InterPro" id="IPR040727">
    <property type="entry name" value="NAPRTase_N"/>
</dbReference>
<dbReference type="InterPro" id="IPR006406">
    <property type="entry name" value="Nic_PRibTrfase"/>
</dbReference>
<dbReference type="InterPro" id="IPR007229">
    <property type="entry name" value="Nic_PRibTrfase-Fam"/>
</dbReference>
<dbReference type="InterPro" id="IPR036068">
    <property type="entry name" value="Nicotinate_pribotase-like_C"/>
</dbReference>
<dbReference type="NCBIfam" id="TIGR01514">
    <property type="entry name" value="NAPRTase"/>
    <property type="match status" value="1"/>
</dbReference>
<dbReference type="NCBIfam" id="NF003704">
    <property type="entry name" value="PRK05321.1"/>
    <property type="match status" value="1"/>
</dbReference>
<dbReference type="PANTHER" id="PTHR11098">
    <property type="entry name" value="NICOTINATE PHOSPHORIBOSYLTRANSFERASE"/>
    <property type="match status" value="1"/>
</dbReference>
<dbReference type="PANTHER" id="PTHR11098:SF1">
    <property type="entry name" value="NICOTINATE PHOSPHORIBOSYLTRANSFERASE"/>
    <property type="match status" value="1"/>
</dbReference>
<dbReference type="Pfam" id="PF04095">
    <property type="entry name" value="NAPRTase"/>
    <property type="match status" value="1"/>
</dbReference>
<dbReference type="Pfam" id="PF17767">
    <property type="entry name" value="NAPRTase_N"/>
    <property type="match status" value="1"/>
</dbReference>
<dbReference type="PIRSF" id="PIRSF000484">
    <property type="entry name" value="NAPRT"/>
    <property type="match status" value="1"/>
</dbReference>
<dbReference type="SUPFAM" id="SSF51690">
    <property type="entry name" value="Nicotinate/Quinolinate PRTase C-terminal domain-like"/>
    <property type="match status" value="1"/>
</dbReference>
<dbReference type="SUPFAM" id="SSF54675">
    <property type="entry name" value="Nicotinate/Quinolinate PRTase N-terminal domain-like"/>
    <property type="match status" value="1"/>
</dbReference>
<reference key="1">
    <citation type="submission" date="2007-08" db="EMBL/GenBank/DDBJ databases">
        <authorList>
            <consortium name="The Citrobacter koseri Genome Sequencing Project"/>
            <person name="McClelland M."/>
            <person name="Sanderson E.K."/>
            <person name="Porwollik S."/>
            <person name="Spieth J."/>
            <person name="Clifton W.S."/>
            <person name="Latreille P."/>
            <person name="Courtney L."/>
            <person name="Wang C."/>
            <person name="Pepin K."/>
            <person name="Bhonagiri V."/>
            <person name="Nash W."/>
            <person name="Johnson M."/>
            <person name="Thiruvilangam P."/>
            <person name="Wilson R."/>
        </authorList>
    </citation>
    <scope>NUCLEOTIDE SEQUENCE [LARGE SCALE GENOMIC DNA]</scope>
    <source>
        <strain>ATCC BAA-895 / CDC 4225-83 / SGSC4696</strain>
    </source>
</reference>
<keyword id="KW-0436">Ligase</keyword>
<keyword id="KW-0597">Phosphoprotein</keyword>
<keyword id="KW-0662">Pyridine nucleotide biosynthesis</keyword>
<keyword id="KW-1185">Reference proteome</keyword>
<organism>
    <name type="scientific">Citrobacter koseri (strain ATCC BAA-895 / CDC 4225-83 / SGSC4696)</name>
    <dbReference type="NCBI Taxonomy" id="290338"/>
    <lineage>
        <taxon>Bacteria</taxon>
        <taxon>Pseudomonadati</taxon>
        <taxon>Pseudomonadota</taxon>
        <taxon>Gammaproteobacteria</taxon>
        <taxon>Enterobacterales</taxon>
        <taxon>Enterobacteriaceae</taxon>
        <taxon>Citrobacter</taxon>
    </lineage>
</organism>
<gene>
    <name evidence="1" type="primary">pncB</name>
    <name type="ordered locus">CKO_02134</name>
</gene>
<name>PNCB_CITK8</name>
<comment type="function">
    <text evidence="1">Catalyzes the synthesis of beta-nicotinate D-ribonucleotide from nicotinate and 5-phospho-D-ribose 1-phosphate at the expense of ATP.</text>
</comment>
<comment type="catalytic activity">
    <reaction evidence="1">
        <text>nicotinate + 5-phospho-alpha-D-ribose 1-diphosphate + ATP + H2O = nicotinate beta-D-ribonucleotide + ADP + phosphate + diphosphate</text>
        <dbReference type="Rhea" id="RHEA:36163"/>
        <dbReference type="ChEBI" id="CHEBI:15377"/>
        <dbReference type="ChEBI" id="CHEBI:30616"/>
        <dbReference type="ChEBI" id="CHEBI:32544"/>
        <dbReference type="ChEBI" id="CHEBI:33019"/>
        <dbReference type="ChEBI" id="CHEBI:43474"/>
        <dbReference type="ChEBI" id="CHEBI:57502"/>
        <dbReference type="ChEBI" id="CHEBI:58017"/>
        <dbReference type="ChEBI" id="CHEBI:456216"/>
        <dbReference type="EC" id="6.3.4.21"/>
    </reaction>
</comment>
<comment type="pathway">
    <text evidence="1">Cofactor biosynthesis; NAD(+) biosynthesis; nicotinate D-ribonucleotide from nicotinate: step 1/1.</text>
</comment>
<comment type="PTM">
    <text evidence="1">Transiently phosphorylated on a His residue during the reaction cycle. Phosphorylation strongly increases the affinity for substrates and increases the rate of nicotinate D-ribonucleotide production. Dephosphorylation regenerates the low-affinity form of the enzyme, leading to product release.</text>
</comment>
<comment type="similarity">
    <text evidence="1">Belongs to the NAPRTase family.</text>
</comment>
<protein>
    <recommendedName>
        <fullName evidence="1">Nicotinate phosphoribosyltransferase</fullName>
        <shortName evidence="1">NAPRTase</shortName>
        <ecNumber evidence="1">6.3.4.21</ecNumber>
    </recommendedName>
</protein>
<evidence type="ECO:0000255" key="1">
    <source>
        <dbReference type="HAMAP-Rule" id="MF_00570"/>
    </source>
</evidence>
<feature type="chain" id="PRO_1000025001" description="Nicotinate phosphoribosyltransferase">
    <location>
        <begin position="1"/>
        <end position="400"/>
    </location>
</feature>
<feature type="modified residue" description="Phosphohistidine; by autocatalysis" evidence="1">
    <location>
        <position position="220"/>
    </location>
</feature>
<proteinExistence type="inferred from homology"/>